<keyword id="KW-1003">Cell membrane</keyword>
<keyword id="KW-0472">Membrane</keyword>
<keyword id="KW-0812">Transmembrane</keyword>
<keyword id="KW-1133">Transmembrane helix</keyword>
<reference key="1">
    <citation type="submission" date="2008-10" db="EMBL/GenBank/DDBJ databases">
        <title>Genome sequence of Bacillus anthracis str. CDC 684.</title>
        <authorList>
            <person name="Dodson R.J."/>
            <person name="Munk A.C."/>
            <person name="Brettin T."/>
            <person name="Bruce D."/>
            <person name="Detter C."/>
            <person name="Tapia R."/>
            <person name="Han C."/>
            <person name="Sutton G."/>
            <person name="Sims D."/>
        </authorList>
    </citation>
    <scope>NUCLEOTIDE SEQUENCE [LARGE SCALE GENOMIC DNA]</scope>
    <source>
        <strain>CDC 684 / NRRL 3495</strain>
    </source>
</reference>
<dbReference type="EMBL" id="CP001215">
    <property type="protein sequence ID" value="ACP12624.1"/>
    <property type="molecule type" value="Genomic_DNA"/>
</dbReference>
<dbReference type="RefSeq" id="WP_000938435.1">
    <property type="nucleotide sequence ID" value="NC_012581.1"/>
</dbReference>
<dbReference type="SMR" id="C3LBH7"/>
<dbReference type="KEGG" id="bah:BAMEG_1207"/>
<dbReference type="HOGENOM" id="CLU_106166_1_1_9"/>
<dbReference type="GO" id="GO:0005886">
    <property type="term" value="C:plasma membrane"/>
    <property type="evidence" value="ECO:0007669"/>
    <property type="project" value="UniProtKB-SubCell"/>
</dbReference>
<dbReference type="CDD" id="cd16381">
    <property type="entry name" value="YitT_C_like_1"/>
    <property type="match status" value="1"/>
</dbReference>
<dbReference type="HAMAP" id="MF_01515">
    <property type="entry name" value="UPF0316"/>
    <property type="match status" value="1"/>
</dbReference>
<dbReference type="InterPro" id="IPR019264">
    <property type="entry name" value="DUF2179"/>
</dbReference>
<dbReference type="InterPro" id="IPR044035">
    <property type="entry name" value="DUF5698"/>
</dbReference>
<dbReference type="InterPro" id="IPR022930">
    <property type="entry name" value="UPF0316"/>
</dbReference>
<dbReference type="NCBIfam" id="NF003193">
    <property type="entry name" value="PRK04164.1-4"/>
    <property type="match status" value="1"/>
</dbReference>
<dbReference type="NCBIfam" id="NF003194">
    <property type="entry name" value="PRK04164.1-5"/>
    <property type="match status" value="1"/>
</dbReference>
<dbReference type="PANTHER" id="PTHR40060">
    <property type="entry name" value="UPF0316 PROTEIN YEBE"/>
    <property type="match status" value="1"/>
</dbReference>
<dbReference type="PANTHER" id="PTHR40060:SF1">
    <property type="entry name" value="UPF0316 PROTEIN YEBE"/>
    <property type="match status" value="1"/>
</dbReference>
<dbReference type="Pfam" id="PF10035">
    <property type="entry name" value="DUF2179"/>
    <property type="match status" value="1"/>
</dbReference>
<dbReference type="Pfam" id="PF18955">
    <property type="entry name" value="DUF5698"/>
    <property type="match status" value="1"/>
</dbReference>
<proteinExistence type="inferred from homology"/>
<gene>
    <name type="ordered locus">BAMEG_1207</name>
</gene>
<sequence length="182" mass="20457">MLQALLIFVLQIIYVPILTIRTILLVKNQTRSAAAVGLLEGAIYIVSLGIVFQDLSNWMNIVAYVIGFSAGLLLGGYIENKLAIGYITYQVSLLDRCNELVDELRHSGFGVTVFEGEGINSIRYRLDIVAKRSREKELLEIINEIAPKAFMSSYEIRSFKGGYLTKAMKKRALMKKKDHHVS</sequence>
<protein>
    <recommendedName>
        <fullName evidence="1">UPF0316 protein BAMEG_1207</fullName>
    </recommendedName>
</protein>
<organism>
    <name type="scientific">Bacillus anthracis (strain CDC 684 / NRRL 3495)</name>
    <dbReference type="NCBI Taxonomy" id="568206"/>
    <lineage>
        <taxon>Bacteria</taxon>
        <taxon>Bacillati</taxon>
        <taxon>Bacillota</taxon>
        <taxon>Bacilli</taxon>
        <taxon>Bacillales</taxon>
        <taxon>Bacillaceae</taxon>
        <taxon>Bacillus</taxon>
        <taxon>Bacillus cereus group</taxon>
    </lineage>
</organism>
<evidence type="ECO:0000255" key="1">
    <source>
        <dbReference type="HAMAP-Rule" id="MF_01515"/>
    </source>
</evidence>
<accession>C3LBH7</accession>
<name>Y1207_BACAC</name>
<comment type="subcellular location">
    <subcellularLocation>
        <location evidence="1">Cell membrane</location>
        <topology evidence="1">Multi-pass membrane protein</topology>
    </subcellularLocation>
</comment>
<comment type="similarity">
    <text evidence="1">Belongs to the UPF0316 family.</text>
</comment>
<feature type="chain" id="PRO_1000185068" description="UPF0316 protein BAMEG_1207">
    <location>
        <begin position="1"/>
        <end position="182"/>
    </location>
</feature>
<feature type="transmembrane region" description="Helical" evidence="1">
    <location>
        <begin position="6"/>
        <end position="26"/>
    </location>
</feature>
<feature type="transmembrane region" description="Helical" evidence="1">
    <location>
        <begin position="32"/>
        <end position="52"/>
    </location>
</feature>
<feature type="transmembrane region" description="Helical" evidence="1">
    <location>
        <begin position="58"/>
        <end position="78"/>
    </location>
</feature>